<sequence length="415" mass="45581">MSNLENFDKEIFDLTNKELQRQCDYLEMIASENFTYPEVMEVMGSILTNKYAEGYPGKRYYGGCEFVDEIEQTAIDRCKKLFGCNFANVQPNSGSQANQGVYGAFIKPGDKILGMDLSNGGHLTHGAKVNASGKFYSSFFYGVEMDGRIDYNRVADIAKIVKPKLIVCGASAYPREIDFAKFREIADSVGAFLFADVAHIAGLVVAGEHTNPFPYCHVVSSTTHKTLRGPRGGIIMTNEEEFAKKINSSIFPGMQGGPLVHVIAGKAVGFKHNLSPEWKTYAKQVKANCKILGDTLMKRGFDLVSGGTDNHLILVSFLKKDYSGKDASNALENAGITVNKNTVPGETRSPFVTSGIRVGSAALTSRGMKEKEFEWIANKIADVLNDINNTSLQSKIKAEVKELASKFIIYDKAMF</sequence>
<evidence type="ECO:0000255" key="1">
    <source>
        <dbReference type="HAMAP-Rule" id="MF_00051"/>
    </source>
</evidence>
<reference key="1">
    <citation type="submission" date="2007-07" db="EMBL/GenBank/DDBJ databases">
        <title>Complete genome sequence of Campylobacter hominis ATCC BAA-381, a commensal isolated from the human gastrointestinal tract.</title>
        <authorList>
            <person name="Fouts D.E."/>
            <person name="Mongodin E.F."/>
            <person name="Puiu D."/>
            <person name="Sebastian Y."/>
            <person name="Miller W.G."/>
            <person name="Mandrell R.E."/>
            <person name="Nelson K.E."/>
        </authorList>
    </citation>
    <scope>NUCLEOTIDE SEQUENCE [LARGE SCALE GENOMIC DNA]</scope>
    <source>
        <strain>ATCC BAA-381 / DSM 21671 / CCUG 45161 / LMG 19568 / NCTC 13146 / CH001A</strain>
    </source>
</reference>
<name>GLYA_CAMHC</name>
<organism>
    <name type="scientific">Campylobacter hominis (strain ATCC BAA-381 / DSM 21671 / CCUG 45161 / LMG 19568 / NCTC 13146 / CH001A)</name>
    <dbReference type="NCBI Taxonomy" id="360107"/>
    <lineage>
        <taxon>Bacteria</taxon>
        <taxon>Pseudomonadati</taxon>
        <taxon>Campylobacterota</taxon>
        <taxon>Epsilonproteobacteria</taxon>
        <taxon>Campylobacterales</taxon>
        <taxon>Campylobacteraceae</taxon>
        <taxon>Campylobacter</taxon>
    </lineage>
</organism>
<feature type="chain" id="PRO_0000369904" description="Serine hydroxymethyltransferase">
    <location>
        <begin position="1"/>
        <end position="415"/>
    </location>
</feature>
<feature type="binding site" evidence="1">
    <location>
        <position position="117"/>
    </location>
    <ligand>
        <name>(6S)-5,6,7,8-tetrahydrofolate</name>
        <dbReference type="ChEBI" id="CHEBI:57453"/>
    </ligand>
</feature>
<feature type="binding site" evidence="1">
    <location>
        <begin position="121"/>
        <end position="123"/>
    </location>
    <ligand>
        <name>(6S)-5,6,7,8-tetrahydrofolate</name>
        <dbReference type="ChEBI" id="CHEBI:57453"/>
    </ligand>
</feature>
<feature type="binding site" evidence="1">
    <location>
        <position position="241"/>
    </location>
    <ligand>
        <name>(6S)-5,6,7,8-tetrahydrofolate</name>
        <dbReference type="ChEBI" id="CHEBI:57453"/>
    </ligand>
</feature>
<feature type="binding site" evidence="1">
    <location>
        <begin position="349"/>
        <end position="351"/>
    </location>
    <ligand>
        <name>(6S)-5,6,7,8-tetrahydrofolate</name>
        <dbReference type="ChEBI" id="CHEBI:57453"/>
    </ligand>
</feature>
<feature type="site" description="Plays an important role in substrate specificity" evidence="1">
    <location>
        <position position="224"/>
    </location>
</feature>
<feature type="modified residue" description="N6-(pyridoxal phosphate)lysine" evidence="1">
    <location>
        <position position="225"/>
    </location>
</feature>
<dbReference type="EC" id="2.1.2.1" evidence="1"/>
<dbReference type="EMBL" id="CP000776">
    <property type="protein sequence ID" value="ABS52316.1"/>
    <property type="molecule type" value="Genomic_DNA"/>
</dbReference>
<dbReference type="RefSeq" id="WP_012109476.1">
    <property type="nucleotide sequence ID" value="NC_009714.1"/>
</dbReference>
<dbReference type="SMR" id="A7I3S9"/>
<dbReference type="STRING" id="360107.CHAB381_1647"/>
<dbReference type="KEGG" id="cha:CHAB381_1647"/>
<dbReference type="eggNOG" id="COG0112">
    <property type="taxonomic scope" value="Bacteria"/>
</dbReference>
<dbReference type="HOGENOM" id="CLU_022477_2_1_7"/>
<dbReference type="OrthoDB" id="9803846at2"/>
<dbReference type="UniPathway" id="UPA00193"/>
<dbReference type="UniPathway" id="UPA00288">
    <property type="reaction ID" value="UER01023"/>
</dbReference>
<dbReference type="Proteomes" id="UP000002407">
    <property type="component" value="Chromosome"/>
</dbReference>
<dbReference type="GO" id="GO:0005829">
    <property type="term" value="C:cytosol"/>
    <property type="evidence" value="ECO:0007669"/>
    <property type="project" value="TreeGrafter"/>
</dbReference>
<dbReference type="GO" id="GO:0004372">
    <property type="term" value="F:glycine hydroxymethyltransferase activity"/>
    <property type="evidence" value="ECO:0007669"/>
    <property type="project" value="UniProtKB-UniRule"/>
</dbReference>
<dbReference type="GO" id="GO:0030170">
    <property type="term" value="F:pyridoxal phosphate binding"/>
    <property type="evidence" value="ECO:0007669"/>
    <property type="project" value="UniProtKB-UniRule"/>
</dbReference>
<dbReference type="GO" id="GO:0019264">
    <property type="term" value="P:glycine biosynthetic process from serine"/>
    <property type="evidence" value="ECO:0007669"/>
    <property type="project" value="UniProtKB-UniRule"/>
</dbReference>
<dbReference type="GO" id="GO:0035999">
    <property type="term" value="P:tetrahydrofolate interconversion"/>
    <property type="evidence" value="ECO:0007669"/>
    <property type="project" value="UniProtKB-UniRule"/>
</dbReference>
<dbReference type="CDD" id="cd00378">
    <property type="entry name" value="SHMT"/>
    <property type="match status" value="1"/>
</dbReference>
<dbReference type="FunFam" id="3.40.640.10:FF:000001">
    <property type="entry name" value="Serine hydroxymethyltransferase"/>
    <property type="match status" value="1"/>
</dbReference>
<dbReference type="Gene3D" id="3.90.1150.10">
    <property type="entry name" value="Aspartate Aminotransferase, domain 1"/>
    <property type="match status" value="1"/>
</dbReference>
<dbReference type="Gene3D" id="3.40.640.10">
    <property type="entry name" value="Type I PLP-dependent aspartate aminotransferase-like (Major domain)"/>
    <property type="match status" value="1"/>
</dbReference>
<dbReference type="HAMAP" id="MF_00051">
    <property type="entry name" value="SHMT"/>
    <property type="match status" value="1"/>
</dbReference>
<dbReference type="InterPro" id="IPR015424">
    <property type="entry name" value="PyrdxlP-dep_Trfase"/>
</dbReference>
<dbReference type="InterPro" id="IPR015421">
    <property type="entry name" value="PyrdxlP-dep_Trfase_major"/>
</dbReference>
<dbReference type="InterPro" id="IPR015422">
    <property type="entry name" value="PyrdxlP-dep_Trfase_small"/>
</dbReference>
<dbReference type="InterPro" id="IPR001085">
    <property type="entry name" value="Ser_HO-MeTrfase"/>
</dbReference>
<dbReference type="InterPro" id="IPR049943">
    <property type="entry name" value="Ser_HO-MeTrfase-like"/>
</dbReference>
<dbReference type="InterPro" id="IPR019798">
    <property type="entry name" value="Ser_HO-MeTrfase_PLP_BS"/>
</dbReference>
<dbReference type="InterPro" id="IPR039429">
    <property type="entry name" value="SHMT-like_dom"/>
</dbReference>
<dbReference type="NCBIfam" id="NF000586">
    <property type="entry name" value="PRK00011.1"/>
    <property type="match status" value="1"/>
</dbReference>
<dbReference type="PANTHER" id="PTHR11680">
    <property type="entry name" value="SERINE HYDROXYMETHYLTRANSFERASE"/>
    <property type="match status" value="1"/>
</dbReference>
<dbReference type="PANTHER" id="PTHR11680:SF50">
    <property type="entry name" value="SERINE HYDROXYMETHYLTRANSFERASE"/>
    <property type="match status" value="1"/>
</dbReference>
<dbReference type="Pfam" id="PF00464">
    <property type="entry name" value="SHMT"/>
    <property type="match status" value="1"/>
</dbReference>
<dbReference type="PIRSF" id="PIRSF000412">
    <property type="entry name" value="SHMT"/>
    <property type="match status" value="1"/>
</dbReference>
<dbReference type="SUPFAM" id="SSF53383">
    <property type="entry name" value="PLP-dependent transferases"/>
    <property type="match status" value="1"/>
</dbReference>
<dbReference type="PROSITE" id="PS00096">
    <property type="entry name" value="SHMT"/>
    <property type="match status" value="1"/>
</dbReference>
<proteinExistence type="inferred from homology"/>
<accession>A7I3S9</accession>
<comment type="function">
    <text evidence="1">Catalyzes the reversible interconversion of serine and glycine with tetrahydrofolate (THF) serving as the one-carbon carrier. This reaction serves as the major source of one-carbon groups required for the biosynthesis of purines, thymidylate, methionine, and other important biomolecules. Also exhibits THF-independent aldolase activity toward beta-hydroxyamino acids, producing glycine and aldehydes, via a retro-aldol mechanism.</text>
</comment>
<comment type="catalytic activity">
    <reaction evidence="1">
        <text>(6R)-5,10-methylene-5,6,7,8-tetrahydrofolate + glycine + H2O = (6S)-5,6,7,8-tetrahydrofolate + L-serine</text>
        <dbReference type="Rhea" id="RHEA:15481"/>
        <dbReference type="ChEBI" id="CHEBI:15377"/>
        <dbReference type="ChEBI" id="CHEBI:15636"/>
        <dbReference type="ChEBI" id="CHEBI:33384"/>
        <dbReference type="ChEBI" id="CHEBI:57305"/>
        <dbReference type="ChEBI" id="CHEBI:57453"/>
        <dbReference type="EC" id="2.1.2.1"/>
    </reaction>
</comment>
<comment type="cofactor">
    <cofactor evidence="1">
        <name>pyridoxal 5'-phosphate</name>
        <dbReference type="ChEBI" id="CHEBI:597326"/>
    </cofactor>
</comment>
<comment type="pathway">
    <text evidence="1">One-carbon metabolism; tetrahydrofolate interconversion.</text>
</comment>
<comment type="pathway">
    <text evidence="1">Amino-acid biosynthesis; glycine biosynthesis; glycine from L-serine: step 1/1.</text>
</comment>
<comment type="subunit">
    <text evidence="1">Homodimer.</text>
</comment>
<comment type="subcellular location">
    <subcellularLocation>
        <location evidence="1">Cytoplasm</location>
    </subcellularLocation>
</comment>
<comment type="similarity">
    <text evidence="1">Belongs to the SHMT family.</text>
</comment>
<gene>
    <name evidence="1" type="primary">glyA</name>
    <name type="ordered locus">CHAB381_1647</name>
</gene>
<keyword id="KW-0028">Amino-acid biosynthesis</keyword>
<keyword id="KW-0963">Cytoplasm</keyword>
<keyword id="KW-0554">One-carbon metabolism</keyword>
<keyword id="KW-0663">Pyridoxal phosphate</keyword>
<keyword id="KW-1185">Reference proteome</keyword>
<keyword id="KW-0808">Transferase</keyword>
<protein>
    <recommendedName>
        <fullName evidence="1">Serine hydroxymethyltransferase</fullName>
        <shortName evidence="1">SHMT</shortName>
        <shortName evidence="1">Serine methylase</shortName>
        <ecNumber evidence="1">2.1.2.1</ecNumber>
    </recommendedName>
</protein>